<proteinExistence type="inferred from homology"/>
<protein>
    <recommendedName>
        <fullName>Probable protease SohB</fullName>
        <ecNumber>3.4.21.-</ecNumber>
    </recommendedName>
</protein>
<comment type="subcellular location">
    <subcellularLocation>
        <location evidence="3">Cell membrane</location>
        <topology evidence="3">Multi-pass membrane protein</topology>
    </subcellularLocation>
</comment>
<comment type="similarity">
    <text evidence="3">Belongs to the peptidase S49 family.</text>
</comment>
<keyword id="KW-1003">Cell membrane</keyword>
<keyword id="KW-0378">Hydrolase</keyword>
<keyword id="KW-0472">Membrane</keyword>
<keyword id="KW-0645">Protease</keyword>
<keyword id="KW-0720">Serine protease</keyword>
<keyword id="KW-0812">Transmembrane</keyword>
<keyword id="KW-1133">Transmembrane helix</keyword>
<gene>
    <name type="primary">sohB</name>
</gene>
<accession>Q44600</accession>
<name>SOHB_BUCSC</name>
<feature type="chain" id="PRO_0000171447" description="Probable protease SohB">
    <location>
        <begin position="1"/>
        <end position="305" status="greater than"/>
    </location>
</feature>
<feature type="transmembrane region" description="Helical" evidence="2">
    <location>
        <begin position="9"/>
        <end position="29"/>
    </location>
</feature>
<feature type="transmembrane region" description="Helical" evidence="2">
    <location>
        <begin position="185"/>
        <end position="205"/>
    </location>
</feature>
<feature type="active site" description="Nucleophile" evidence="1">
    <location>
        <position position="179"/>
    </location>
</feature>
<feature type="active site" description="Proton donor/acceptor" evidence="1">
    <location>
        <position position="231"/>
    </location>
</feature>
<feature type="non-terminal residue">
    <location>
        <position position="305"/>
    </location>
</feature>
<sequence length="305" mass="34840">MDFILNYALFFFKIFTLFALILTIFLIIVNVARHKSKKKYELDIVSLNSYYEHVKNKIILSTMSTYEKKIWNKSNKLFKKTRSKINMTFLKKNKYYLNQNNPILYVLDFKGNVSASEVTSLREEISAIILAAKENDEVLLRLESGGGVIHGYGLASSQLSRLREKNIRLTVSVDKIAASGGYMMACVANYIIAAPFSVIGSIGVVAQIPNFNKLLKKNNVDMELHTSGLYKRTLTVFGENTKEAREKFCKDLNFTHVLFKEFVHSMRPSLNIDEVSTGEHWFGTTALEKKLIDKIETSDDFIISR</sequence>
<reference key="1">
    <citation type="journal article" date="1995" name="Insect Mol. Biol.">
        <title>Genetics of the tryptophan biosynthetic pathway of the prokaryotic endosymbiont (Buchnera) of the aphid Schlechtendalia chinensis.</title>
        <authorList>
            <person name="Lai C.-Y."/>
            <person name="Baumann P."/>
            <person name="Moran N.A."/>
        </authorList>
    </citation>
    <scope>NUCLEOTIDE SEQUENCE [GENOMIC DNA]</scope>
</reference>
<evidence type="ECO:0000250" key="1"/>
<evidence type="ECO:0000255" key="2"/>
<evidence type="ECO:0000305" key="3"/>
<dbReference type="EC" id="3.4.21.-"/>
<dbReference type="EMBL" id="U09185">
    <property type="protein sequence ID" value="AAA92792.1"/>
    <property type="molecule type" value="Genomic_DNA"/>
</dbReference>
<dbReference type="SMR" id="Q44600"/>
<dbReference type="STRING" id="118110.XW81_01325"/>
<dbReference type="GO" id="GO:0005886">
    <property type="term" value="C:plasma membrane"/>
    <property type="evidence" value="ECO:0007669"/>
    <property type="project" value="UniProtKB-SubCell"/>
</dbReference>
<dbReference type="GO" id="GO:0004252">
    <property type="term" value="F:serine-type endopeptidase activity"/>
    <property type="evidence" value="ECO:0007669"/>
    <property type="project" value="InterPro"/>
</dbReference>
<dbReference type="GO" id="GO:0006508">
    <property type="term" value="P:proteolysis"/>
    <property type="evidence" value="ECO:0007669"/>
    <property type="project" value="UniProtKB-KW"/>
</dbReference>
<dbReference type="CDD" id="cd07023">
    <property type="entry name" value="S49_Sppa_N_C"/>
    <property type="match status" value="1"/>
</dbReference>
<dbReference type="Gene3D" id="3.90.226.10">
    <property type="entry name" value="2-enoyl-CoA Hydratase, Chain A, domain 1"/>
    <property type="match status" value="1"/>
</dbReference>
<dbReference type="InterPro" id="IPR029045">
    <property type="entry name" value="ClpP/crotonase-like_dom_sf"/>
</dbReference>
<dbReference type="InterPro" id="IPR002142">
    <property type="entry name" value="Peptidase_S49"/>
</dbReference>
<dbReference type="InterPro" id="IPR013703">
    <property type="entry name" value="Peptidase_S49_N_proteobac"/>
</dbReference>
<dbReference type="InterPro" id="IPR047272">
    <property type="entry name" value="S49_SppA_C"/>
</dbReference>
<dbReference type="NCBIfam" id="NF008745">
    <property type="entry name" value="PRK11778.1"/>
    <property type="match status" value="1"/>
</dbReference>
<dbReference type="PANTHER" id="PTHR42987">
    <property type="entry name" value="PEPTIDASE S49"/>
    <property type="match status" value="1"/>
</dbReference>
<dbReference type="PANTHER" id="PTHR42987:SF4">
    <property type="entry name" value="PROTEASE SOHB-RELATED"/>
    <property type="match status" value="1"/>
</dbReference>
<dbReference type="Pfam" id="PF01343">
    <property type="entry name" value="Peptidase_S49"/>
    <property type="match status" value="1"/>
</dbReference>
<dbReference type="Pfam" id="PF08496">
    <property type="entry name" value="Peptidase_S49_N"/>
    <property type="match status" value="1"/>
</dbReference>
<dbReference type="SUPFAM" id="SSF52096">
    <property type="entry name" value="ClpP/crotonase"/>
    <property type="match status" value="1"/>
</dbReference>
<organism>
    <name type="scientific">Buchnera aphidicola subsp. Schlechtendalia chinensis</name>
    <dbReference type="NCBI Taxonomy" id="118110"/>
    <lineage>
        <taxon>Bacteria</taxon>
        <taxon>Pseudomonadati</taxon>
        <taxon>Pseudomonadota</taxon>
        <taxon>Gammaproteobacteria</taxon>
        <taxon>Enterobacterales</taxon>
        <taxon>Erwiniaceae</taxon>
        <taxon>Buchnera</taxon>
    </lineage>
</organism>